<organism>
    <name type="scientific">Rhizobium meliloti (strain 1021)</name>
    <name type="common">Ensifer meliloti</name>
    <name type="synonym">Sinorhizobium meliloti</name>
    <dbReference type="NCBI Taxonomy" id="266834"/>
    <lineage>
        <taxon>Bacteria</taxon>
        <taxon>Pseudomonadati</taxon>
        <taxon>Pseudomonadota</taxon>
        <taxon>Alphaproteobacteria</taxon>
        <taxon>Hyphomicrobiales</taxon>
        <taxon>Rhizobiaceae</taxon>
        <taxon>Sinorhizobium/Ensifer group</taxon>
        <taxon>Sinorhizobium</taxon>
    </lineage>
</organism>
<keyword id="KW-0131">Cell cycle</keyword>
<keyword id="KW-0132">Cell division</keyword>
<keyword id="KW-0997">Cell inner membrane</keyword>
<keyword id="KW-1003">Cell membrane</keyword>
<keyword id="KW-0133">Cell shape</keyword>
<keyword id="KW-0961">Cell wall biogenesis/degradation</keyword>
<keyword id="KW-0460">Magnesium</keyword>
<keyword id="KW-0472">Membrane</keyword>
<keyword id="KW-0479">Metal-binding</keyword>
<keyword id="KW-0573">Peptidoglycan synthesis</keyword>
<keyword id="KW-1185">Reference proteome</keyword>
<keyword id="KW-0808">Transferase</keyword>
<keyword id="KW-0812">Transmembrane</keyword>
<keyword id="KW-1133">Transmembrane helix</keyword>
<proteinExistence type="inferred from homology"/>
<evidence type="ECO:0000255" key="1">
    <source>
        <dbReference type="HAMAP-Rule" id="MF_00038"/>
    </source>
</evidence>
<evidence type="ECO:0000305" key="2"/>
<protein>
    <recommendedName>
        <fullName evidence="1">Phospho-N-acetylmuramoyl-pentapeptide-transferase</fullName>
        <ecNumber evidence="1">2.7.8.13</ecNumber>
    </recommendedName>
    <alternativeName>
        <fullName evidence="1">UDP-MurNAc-pentapeptide phosphotransferase</fullName>
    </alternativeName>
</protein>
<accession>Q52952</accession>
<dbReference type="EC" id="2.7.8.13" evidence="1"/>
<dbReference type="EMBL" id="AL591688">
    <property type="protein sequence ID" value="CAC46758.1"/>
    <property type="molecule type" value="Genomic_DNA"/>
</dbReference>
<dbReference type="EMBL" id="L25875">
    <property type="protein sequence ID" value="AAA66471.1"/>
    <property type="status" value="ALT_FRAME"/>
    <property type="molecule type" value="Genomic_DNA"/>
</dbReference>
<dbReference type="RefSeq" id="NP_386285.1">
    <property type="nucleotide sequence ID" value="NC_003047.1"/>
</dbReference>
<dbReference type="RefSeq" id="WP_003529135.1">
    <property type="nucleotide sequence ID" value="NC_003047.1"/>
</dbReference>
<dbReference type="SMR" id="Q52952"/>
<dbReference type="EnsemblBacteria" id="CAC46758">
    <property type="protein sequence ID" value="CAC46758"/>
    <property type="gene ID" value="SMc01863"/>
</dbReference>
<dbReference type="GeneID" id="89576531"/>
<dbReference type="KEGG" id="sme:SMc01863"/>
<dbReference type="PATRIC" id="fig|266834.11.peg.3645"/>
<dbReference type="eggNOG" id="COG0472">
    <property type="taxonomic scope" value="Bacteria"/>
</dbReference>
<dbReference type="HOGENOM" id="CLU_023982_0_0_5"/>
<dbReference type="OrthoDB" id="9805475at2"/>
<dbReference type="UniPathway" id="UPA00219"/>
<dbReference type="Proteomes" id="UP000001976">
    <property type="component" value="Chromosome"/>
</dbReference>
<dbReference type="GO" id="GO:0005886">
    <property type="term" value="C:plasma membrane"/>
    <property type="evidence" value="ECO:0007669"/>
    <property type="project" value="UniProtKB-SubCell"/>
</dbReference>
<dbReference type="GO" id="GO:0046872">
    <property type="term" value="F:metal ion binding"/>
    <property type="evidence" value="ECO:0007669"/>
    <property type="project" value="UniProtKB-KW"/>
</dbReference>
<dbReference type="GO" id="GO:0008963">
    <property type="term" value="F:phospho-N-acetylmuramoyl-pentapeptide-transferase activity"/>
    <property type="evidence" value="ECO:0007669"/>
    <property type="project" value="UniProtKB-UniRule"/>
</dbReference>
<dbReference type="GO" id="GO:0051992">
    <property type="term" value="F:UDP-N-acetylmuramoyl-L-alanyl-D-glutamyl-meso-2,6-diaminopimelyl-D-alanyl-D-alanine:undecaprenyl-phosphate transferase activity"/>
    <property type="evidence" value="ECO:0007669"/>
    <property type="project" value="RHEA"/>
</dbReference>
<dbReference type="GO" id="GO:0051301">
    <property type="term" value="P:cell division"/>
    <property type="evidence" value="ECO:0007669"/>
    <property type="project" value="UniProtKB-KW"/>
</dbReference>
<dbReference type="GO" id="GO:0071555">
    <property type="term" value="P:cell wall organization"/>
    <property type="evidence" value="ECO:0007669"/>
    <property type="project" value="UniProtKB-KW"/>
</dbReference>
<dbReference type="GO" id="GO:0009252">
    <property type="term" value="P:peptidoglycan biosynthetic process"/>
    <property type="evidence" value="ECO:0007669"/>
    <property type="project" value="UniProtKB-UniRule"/>
</dbReference>
<dbReference type="GO" id="GO:0008360">
    <property type="term" value="P:regulation of cell shape"/>
    <property type="evidence" value="ECO:0007669"/>
    <property type="project" value="UniProtKB-KW"/>
</dbReference>
<dbReference type="CDD" id="cd06852">
    <property type="entry name" value="GT_MraY"/>
    <property type="match status" value="1"/>
</dbReference>
<dbReference type="HAMAP" id="MF_00038">
    <property type="entry name" value="MraY"/>
    <property type="match status" value="1"/>
</dbReference>
<dbReference type="InterPro" id="IPR000715">
    <property type="entry name" value="Glycosyl_transferase_4"/>
</dbReference>
<dbReference type="InterPro" id="IPR003524">
    <property type="entry name" value="PNAcMuramoyl-5peptid_Trfase"/>
</dbReference>
<dbReference type="InterPro" id="IPR018480">
    <property type="entry name" value="PNAcMuramoyl-5peptid_Trfase_CS"/>
</dbReference>
<dbReference type="NCBIfam" id="TIGR00445">
    <property type="entry name" value="mraY"/>
    <property type="match status" value="1"/>
</dbReference>
<dbReference type="PANTHER" id="PTHR22926">
    <property type="entry name" value="PHOSPHO-N-ACETYLMURAMOYL-PENTAPEPTIDE-TRANSFERASE"/>
    <property type="match status" value="1"/>
</dbReference>
<dbReference type="PANTHER" id="PTHR22926:SF5">
    <property type="entry name" value="PHOSPHO-N-ACETYLMURAMOYL-PENTAPEPTIDE-TRANSFERASE HOMOLOG"/>
    <property type="match status" value="1"/>
</dbReference>
<dbReference type="Pfam" id="PF00953">
    <property type="entry name" value="Glycos_transf_4"/>
    <property type="match status" value="1"/>
</dbReference>
<dbReference type="Pfam" id="PF10555">
    <property type="entry name" value="MraY_sig1"/>
    <property type="match status" value="1"/>
</dbReference>
<dbReference type="PROSITE" id="PS01347">
    <property type="entry name" value="MRAY_1"/>
    <property type="match status" value="1"/>
</dbReference>
<dbReference type="PROSITE" id="PS01348">
    <property type="entry name" value="MRAY_2"/>
    <property type="match status" value="1"/>
</dbReference>
<reference key="1">
    <citation type="journal article" date="2001" name="Proc. Natl. Acad. Sci. U.S.A.">
        <title>Analysis of the chromosome sequence of the legume symbiont Sinorhizobium meliloti strain 1021.</title>
        <authorList>
            <person name="Capela D."/>
            <person name="Barloy-Hubler F."/>
            <person name="Gouzy J."/>
            <person name="Bothe G."/>
            <person name="Ampe F."/>
            <person name="Batut J."/>
            <person name="Boistard P."/>
            <person name="Becker A."/>
            <person name="Boutry M."/>
            <person name="Cadieu E."/>
            <person name="Dreano S."/>
            <person name="Gloux S."/>
            <person name="Godrie T."/>
            <person name="Goffeau A."/>
            <person name="Kahn D."/>
            <person name="Kiss E."/>
            <person name="Lelaure V."/>
            <person name="Masuy D."/>
            <person name="Pohl T."/>
            <person name="Portetelle D."/>
            <person name="Puehler A."/>
            <person name="Purnelle B."/>
            <person name="Ramsperger U."/>
            <person name="Renard C."/>
            <person name="Thebault P."/>
            <person name="Vandenbol M."/>
            <person name="Weidner S."/>
            <person name="Galibert F."/>
        </authorList>
    </citation>
    <scope>NUCLEOTIDE SEQUENCE [LARGE SCALE GENOMIC DNA]</scope>
    <source>
        <strain>1021</strain>
    </source>
</reference>
<reference key="2">
    <citation type="journal article" date="2001" name="Science">
        <title>The composite genome of the legume symbiont Sinorhizobium meliloti.</title>
        <authorList>
            <person name="Galibert F."/>
            <person name="Finan T.M."/>
            <person name="Long S.R."/>
            <person name="Puehler A."/>
            <person name="Abola P."/>
            <person name="Ampe F."/>
            <person name="Barloy-Hubler F."/>
            <person name="Barnett M.J."/>
            <person name="Becker A."/>
            <person name="Boistard P."/>
            <person name="Bothe G."/>
            <person name="Boutry M."/>
            <person name="Bowser L."/>
            <person name="Buhrmester J."/>
            <person name="Cadieu E."/>
            <person name="Capela D."/>
            <person name="Chain P."/>
            <person name="Cowie A."/>
            <person name="Davis R.W."/>
            <person name="Dreano S."/>
            <person name="Federspiel N.A."/>
            <person name="Fisher R.F."/>
            <person name="Gloux S."/>
            <person name="Godrie T."/>
            <person name="Goffeau A."/>
            <person name="Golding B."/>
            <person name="Gouzy J."/>
            <person name="Gurjal M."/>
            <person name="Hernandez-Lucas I."/>
            <person name="Hong A."/>
            <person name="Huizar L."/>
            <person name="Hyman R.W."/>
            <person name="Jones T."/>
            <person name="Kahn D."/>
            <person name="Kahn M.L."/>
            <person name="Kalman S."/>
            <person name="Keating D.H."/>
            <person name="Kiss E."/>
            <person name="Komp C."/>
            <person name="Lelaure V."/>
            <person name="Masuy D."/>
            <person name="Palm C."/>
            <person name="Peck M.C."/>
            <person name="Pohl T.M."/>
            <person name="Portetelle D."/>
            <person name="Purnelle B."/>
            <person name="Ramsperger U."/>
            <person name="Surzycki R."/>
            <person name="Thebault P."/>
            <person name="Vandenbol M."/>
            <person name="Vorhoelter F.J."/>
            <person name="Weidner S."/>
            <person name="Wells D.H."/>
            <person name="Wong K."/>
            <person name="Yeh K.-C."/>
            <person name="Batut J."/>
        </authorList>
    </citation>
    <scope>NUCLEOTIDE SEQUENCE [LARGE SCALE GENOMIC DNA]</scope>
    <source>
        <strain>1021</strain>
    </source>
</reference>
<reference key="3">
    <citation type="journal article" date="1994" name="Gene">
        <title>Rhizobium meliloti homologs of Escherichia coli mur genes.</title>
        <authorList>
            <person name="Leach F."/>
            <person name="Wacks D.B."/>
            <person name="Signer E.R."/>
        </authorList>
    </citation>
    <scope>PRELIMINARY NUCLEOTIDE SEQUENCE [GENOMIC DNA] OF 234-366</scope>
    <source>
        <strain>1021</strain>
    </source>
</reference>
<comment type="function">
    <text evidence="1">Catalyzes the initial step of the lipid cycle reactions in the biosynthesis of the cell wall peptidoglycan: transfers peptidoglycan precursor phospho-MurNAc-pentapeptide from UDP-MurNAc-pentapeptide onto the lipid carrier undecaprenyl phosphate, yielding undecaprenyl-pyrophosphoryl-MurNAc-pentapeptide, known as lipid I.</text>
</comment>
<comment type="catalytic activity">
    <reaction evidence="1">
        <text>UDP-N-acetyl-alpha-D-muramoyl-L-alanyl-gamma-D-glutamyl-meso-2,6-diaminopimeloyl-D-alanyl-D-alanine + di-trans,octa-cis-undecaprenyl phosphate = di-trans,octa-cis-undecaprenyl diphospho-N-acetyl-alpha-D-muramoyl-L-alanyl-D-glutamyl-meso-2,6-diaminopimeloyl-D-alanyl-D-alanine + UMP</text>
        <dbReference type="Rhea" id="RHEA:28386"/>
        <dbReference type="ChEBI" id="CHEBI:57865"/>
        <dbReference type="ChEBI" id="CHEBI:60392"/>
        <dbReference type="ChEBI" id="CHEBI:61386"/>
        <dbReference type="ChEBI" id="CHEBI:61387"/>
        <dbReference type="EC" id="2.7.8.13"/>
    </reaction>
</comment>
<comment type="cofactor">
    <cofactor evidence="1">
        <name>Mg(2+)</name>
        <dbReference type="ChEBI" id="CHEBI:18420"/>
    </cofactor>
</comment>
<comment type="pathway">
    <text evidence="1">Cell wall biogenesis; peptidoglycan biosynthesis.</text>
</comment>
<comment type="subcellular location">
    <subcellularLocation>
        <location evidence="1">Cell inner membrane</location>
        <topology evidence="1">Multi-pass membrane protein</topology>
    </subcellularLocation>
</comment>
<comment type="similarity">
    <text evidence="1">Belongs to the glycosyltransferase 4 family. MraY subfamily.</text>
</comment>
<comment type="sequence caution" evidence="2">
    <conflict type="frameshift">
        <sequence resource="EMBL-CDS" id="AAA66471"/>
    </conflict>
</comment>
<name>MRAY_RHIME</name>
<gene>
    <name evidence="1" type="primary">mraY</name>
    <name type="ordered locus">R02179</name>
    <name type="ORF">SMc01863</name>
</gene>
<feature type="chain" id="PRO_0000108876" description="Phospho-N-acetylmuramoyl-pentapeptide-transferase">
    <location>
        <begin position="1"/>
        <end position="366"/>
    </location>
</feature>
<feature type="transmembrane region" description="Helical" evidence="1">
    <location>
        <begin position="27"/>
        <end position="47"/>
    </location>
</feature>
<feature type="transmembrane region" description="Helical" evidence="1">
    <location>
        <begin position="71"/>
        <end position="91"/>
    </location>
</feature>
<feature type="transmembrane region" description="Helical" evidence="1">
    <location>
        <begin position="93"/>
        <end position="113"/>
    </location>
</feature>
<feature type="transmembrane region" description="Helical" evidence="1">
    <location>
        <begin position="138"/>
        <end position="158"/>
    </location>
</feature>
<feature type="transmembrane region" description="Helical" evidence="1">
    <location>
        <begin position="174"/>
        <end position="194"/>
    </location>
</feature>
<feature type="transmembrane region" description="Helical" evidence="1">
    <location>
        <begin position="205"/>
        <end position="225"/>
    </location>
</feature>
<feature type="transmembrane region" description="Helical" evidence="1">
    <location>
        <begin position="245"/>
        <end position="265"/>
    </location>
</feature>
<feature type="transmembrane region" description="Helical" evidence="1">
    <location>
        <begin position="268"/>
        <end position="288"/>
    </location>
</feature>
<feature type="transmembrane region" description="Helical" evidence="1">
    <location>
        <begin position="297"/>
        <end position="317"/>
    </location>
</feature>
<feature type="transmembrane region" description="Helical" evidence="1">
    <location>
        <begin position="343"/>
        <end position="363"/>
    </location>
</feature>
<feature type="sequence conflict" description="In Ref. 3; AAA66471." evidence="2" ref="3">
    <location>
        <position position="255"/>
    </location>
</feature>
<sequence>MLIWLVELADHFQFFNLFRYITFRTGAALFTSALIVFLFGPAMIASLRIRQGKGQPIRADGPQTHFKKAGTPTMGGLMILTGIVVSSLLWADLSSIYVVSTLLVTLGFGAIGFYDDYLKVTKQSEKGFSGKARLGIEFVIAAVAVFFMMQAALSAGAAGSTFGSSVTFPFFKDLMLNLGYFFVLFGGFVIVGAGNSVNLTDGLDGLAIVPVMIASAAFGLIAYLAGNAVFANYLQIHFVPGTGELAVILGAVIGAGLGFLWFNAPPAAIFMGDTGSLALGGLIGTVAVATKHEIVMIIIGGLFVIETLSVIIQVFWFKRTGHRVFLMAPIHHHFEKKGWTESQVVIRFWIIAVILAMVGLSTLKLR</sequence>